<evidence type="ECO:0000250" key="1"/>
<evidence type="ECO:0000255" key="2"/>
<evidence type="ECO:0000305" key="3"/>
<gene>
    <name type="primary">MT-ND4</name>
    <name type="synonym">MTND4</name>
    <name type="synonym">NADH4</name>
    <name type="synonym">ND4</name>
</gene>
<comment type="function">
    <text evidence="1">Core subunit of the mitochondrial membrane respiratory chain NADH dehydrogenase (Complex I) that is believed to belong to the minimal assembly required for catalysis. Complex I functions in the transfer of electrons from NADH to the respiratory chain. The immediate electron acceptor for the enzyme is believed to be ubiquinone (By similarity).</text>
</comment>
<comment type="catalytic activity">
    <reaction>
        <text>a ubiquinone + NADH + 5 H(+)(in) = a ubiquinol + NAD(+) + 4 H(+)(out)</text>
        <dbReference type="Rhea" id="RHEA:29091"/>
        <dbReference type="Rhea" id="RHEA-COMP:9565"/>
        <dbReference type="Rhea" id="RHEA-COMP:9566"/>
        <dbReference type="ChEBI" id="CHEBI:15378"/>
        <dbReference type="ChEBI" id="CHEBI:16389"/>
        <dbReference type="ChEBI" id="CHEBI:17976"/>
        <dbReference type="ChEBI" id="CHEBI:57540"/>
        <dbReference type="ChEBI" id="CHEBI:57945"/>
        <dbReference type="EC" id="7.1.1.2"/>
    </reaction>
</comment>
<comment type="subcellular location">
    <subcellularLocation>
        <location evidence="1">Mitochondrion membrane</location>
        <topology evidence="1">Multi-pass membrane protein</topology>
    </subcellularLocation>
</comment>
<comment type="similarity">
    <text evidence="3">Belongs to the complex I subunit 4 family.</text>
</comment>
<sequence length="231" mass="25491">PIAGSMVLAAILLKLGGYGIIRMMQILPTTKTDMFLPFIVLALWGAILANLTCLQQTDLKSLIAYSSISHMGLVVAAIIIQTPWGLSGAMALMIAHGFTSSALFCLANTTYERTHTRILILTRGLHNILPMATTWWLLTNLMNIAIPPTMNFTGELLIMSALFNWCPTTIIMLGLSMLITASYSLHMFLSTQMGPTPLNNQTEPTHSREHLLMILHLIPLMMISMKPELII</sequence>
<keyword id="KW-0249">Electron transport</keyword>
<keyword id="KW-0472">Membrane</keyword>
<keyword id="KW-0496">Mitochondrion</keyword>
<keyword id="KW-0520">NAD</keyword>
<keyword id="KW-0679">Respiratory chain</keyword>
<keyword id="KW-1278">Translocase</keyword>
<keyword id="KW-0812">Transmembrane</keyword>
<keyword id="KW-1133">Transmembrane helix</keyword>
<keyword id="KW-0813">Transport</keyword>
<keyword id="KW-0830">Ubiquinone</keyword>
<organism>
    <name type="scientific">Agkistrodon piscivorus piscivorus</name>
    <name type="common">Eastern cottonmouth</name>
    <dbReference type="NCBI Taxonomy" id="8716"/>
    <lineage>
        <taxon>Eukaryota</taxon>
        <taxon>Metazoa</taxon>
        <taxon>Chordata</taxon>
        <taxon>Craniata</taxon>
        <taxon>Vertebrata</taxon>
        <taxon>Euteleostomi</taxon>
        <taxon>Lepidosauria</taxon>
        <taxon>Squamata</taxon>
        <taxon>Bifurcata</taxon>
        <taxon>Unidentata</taxon>
        <taxon>Episquamata</taxon>
        <taxon>Toxicofera</taxon>
        <taxon>Serpentes</taxon>
        <taxon>Colubroidea</taxon>
        <taxon>Viperidae</taxon>
        <taxon>Crotalinae</taxon>
        <taxon>Agkistrodon</taxon>
    </lineage>
</organism>
<geneLocation type="mitochondrion"/>
<proteinExistence type="inferred from homology"/>
<reference key="1">
    <citation type="journal article" date="1996" name="Copeia">
        <title>Crotaline intergeneric relationships based on mitochondrial DNA sequence data.</title>
        <authorList>
            <person name="Kraus F."/>
            <person name="Mink D.G."/>
            <person name="Brown W.M."/>
        </authorList>
    </citation>
    <scope>NUCLEOTIDE SEQUENCE [GENOMIC DNA]</scope>
</reference>
<dbReference type="EC" id="7.1.1.2"/>
<dbReference type="EMBL" id="U41870">
    <property type="protein sequence ID" value="AAB46630.1"/>
    <property type="molecule type" value="Genomic_DNA"/>
</dbReference>
<dbReference type="SMR" id="P92503"/>
<dbReference type="GO" id="GO:0031966">
    <property type="term" value="C:mitochondrial membrane"/>
    <property type="evidence" value="ECO:0007669"/>
    <property type="project" value="UniProtKB-SubCell"/>
</dbReference>
<dbReference type="GO" id="GO:0008137">
    <property type="term" value="F:NADH dehydrogenase (ubiquinone) activity"/>
    <property type="evidence" value="ECO:0007669"/>
    <property type="project" value="UniProtKB-EC"/>
</dbReference>
<dbReference type="GO" id="GO:0048039">
    <property type="term" value="F:ubiquinone binding"/>
    <property type="evidence" value="ECO:0007669"/>
    <property type="project" value="TreeGrafter"/>
</dbReference>
<dbReference type="GO" id="GO:0042773">
    <property type="term" value="P:ATP synthesis coupled electron transport"/>
    <property type="evidence" value="ECO:0007669"/>
    <property type="project" value="InterPro"/>
</dbReference>
<dbReference type="GO" id="GO:0015990">
    <property type="term" value="P:electron transport coupled proton transport"/>
    <property type="evidence" value="ECO:0007669"/>
    <property type="project" value="TreeGrafter"/>
</dbReference>
<dbReference type="InterPro" id="IPR003918">
    <property type="entry name" value="NADH_UbQ_OxRdtase"/>
</dbReference>
<dbReference type="InterPro" id="IPR001750">
    <property type="entry name" value="ND/Mrp_TM"/>
</dbReference>
<dbReference type="PANTHER" id="PTHR43507">
    <property type="entry name" value="NADH-UBIQUINONE OXIDOREDUCTASE CHAIN 4"/>
    <property type="match status" value="1"/>
</dbReference>
<dbReference type="PANTHER" id="PTHR43507:SF20">
    <property type="entry name" value="NADH-UBIQUINONE OXIDOREDUCTASE CHAIN 4"/>
    <property type="match status" value="1"/>
</dbReference>
<dbReference type="Pfam" id="PF00361">
    <property type="entry name" value="Proton_antipo_M"/>
    <property type="match status" value="1"/>
</dbReference>
<protein>
    <recommendedName>
        <fullName>NADH-ubiquinone oxidoreductase chain 4</fullName>
        <ecNumber>7.1.1.2</ecNumber>
    </recommendedName>
    <alternativeName>
        <fullName>NADH dehydrogenase subunit 4</fullName>
    </alternativeName>
</protein>
<accession>P92503</accession>
<feature type="chain" id="PRO_0000117882" description="NADH-ubiquinone oxidoreductase chain 4">
    <location>
        <begin position="1" status="less than"/>
        <end position="231" status="greater than"/>
    </location>
</feature>
<feature type="transmembrane region" description="Helical" evidence="2">
    <location>
        <begin position="1"/>
        <end position="21"/>
    </location>
</feature>
<feature type="transmembrane region" description="Helical" evidence="2">
    <location>
        <begin position="34"/>
        <end position="54"/>
    </location>
</feature>
<feature type="transmembrane region" description="Helical" evidence="2">
    <location>
        <begin position="63"/>
        <end position="85"/>
    </location>
</feature>
<feature type="transmembrane region" description="Helical" evidence="2">
    <location>
        <begin position="89"/>
        <end position="111"/>
    </location>
</feature>
<feature type="transmembrane region" description="Helical" evidence="2">
    <location>
        <begin position="128"/>
        <end position="148"/>
    </location>
</feature>
<feature type="transmembrane region" description="Helical" evidence="2">
    <location>
        <begin position="156"/>
        <end position="176"/>
    </location>
</feature>
<feature type="transmembrane region" description="Helical" evidence="2">
    <location>
        <begin position="211"/>
        <end position="231"/>
    </location>
</feature>
<feature type="non-terminal residue">
    <location>
        <position position="1"/>
    </location>
</feature>
<feature type="non-terminal residue">
    <location>
        <position position="231"/>
    </location>
</feature>
<name>NU4M_AGKPI</name>